<name>PRDX4_HUMAN</name>
<reference key="1">
    <citation type="journal article" date="1997" name="J. Biol. Chem.">
        <title>Regulatory role for a novel human thioredoxin peroxidase in NF-kappaB activation.</title>
        <authorList>
            <person name="Jin D.-Y."/>
            <person name="Chae H.Z."/>
            <person name="Rhee S.G."/>
            <person name="Jeang K.-T."/>
        </authorList>
    </citation>
    <scope>NUCLEOTIDE SEQUENCE [MRNA]</scope>
    <scope>FUNCTION</scope>
    <scope>CATALYTIC ACTIVITY</scope>
    <scope>SUBCELLULAR LOCATION</scope>
    <scope>SUBUNIT</scope>
</reference>
<reference key="2">
    <citation type="submission" date="2004-06" db="EMBL/GenBank/DDBJ databases">
        <title>Cloning of human full open reading frames in Gateway(TM) system entry vector (pDONR201).</title>
        <authorList>
            <person name="Ebert L."/>
            <person name="Schick M."/>
            <person name="Neubert P."/>
            <person name="Schatten R."/>
            <person name="Henze S."/>
            <person name="Korn B."/>
        </authorList>
    </citation>
    <scope>NUCLEOTIDE SEQUENCE [LARGE SCALE MRNA]</scope>
</reference>
<reference key="3">
    <citation type="journal article" date="2004" name="Genome Res.">
        <title>The status, quality, and expansion of the NIH full-length cDNA project: the Mammalian Gene Collection (MGC).</title>
        <authorList>
            <consortium name="The MGC Project Team"/>
        </authorList>
    </citation>
    <scope>NUCLEOTIDE SEQUENCE [LARGE SCALE MRNA]</scope>
    <source>
        <tissue>Brain</tissue>
    </source>
</reference>
<reference key="4">
    <citation type="journal article" date="2009" name="Proc. Natl. Acad. Sci. U.S.A.">
        <title>Global profiling of protease cleavage sites by chemoselective labeling of protein N-termini.</title>
        <authorList>
            <person name="Xu G."/>
            <person name="Shin S.B."/>
            <person name="Jaffrey S.R."/>
        </authorList>
    </citation>
    <scope>PROTEIN SEQUENCE [LARGE SCALE ANALYSIS] OF 38-46</scope>
    <source>
        <tissue>Leukemic T-cell</tissue>
    </source>
</reference>
<reference key="5">
    <citation type="submission" date="2008-12" db="UniProtKB">
        <authorList>
            <person name="Lubec G."/>
            <person name="Afjehi-Sadat L."/>
            <person name="Chen W.-Q."/>
            <person name="Sun Y."/>
        </authorList>
    </citation>
    <scope>PROTEIN SEQUENCE OF 46-66; 81-99; 140-164; 174-208; 213-223 AND 231-263</scope>
    <scope>IDENTIFICATION BY MASS SPECTROMETRY</scope>
    <source>
        <tissue>Brain</tissue>
        <tissue>Cajal-Retzius cell</tissue>
        <tissue>Fetal brain cortex</tissue>
    </source>
</reference>
<reference key="6">
    <citation type="journal article" date="2002" name="Biochem. J.">
        <title>A method for detection of overoxidation of cysteines: peroxiredoxins are oxidized in vivo at the active-site cysteine during oxidative stress.</title>
        <authorList>
            <person name="Wagner E."/>
            <person name="Luche S."/>
            <person name="Penna L."/>
            <person name="Chevallet M."/>
            <person name="van Dorsselaer A."/>
            <person name="Leize-Wagner E."/>
            <person name="Rabilloud T."/>
        </authorList>
    </citation>
    <scope>OVEROXIDATION AT CYS-124</scope>
</reference>
<reference key="7">
    <citation type="journal article" date="2008" name="Biochem. J.">
        <title>Peroxiredoxin IV is an endoplasmic reticulum-localized enzyme forming oligomeric complexes in human cells.</title>
        <authorList>
            <person name="Tavender T.J."/>
            <person name="Sheppard A.M."/>
            <person name="Bulleid N.J."/>
        </authorList>
    </citation>
    <scope>SUBCELLULAR LOCATION</scope>
</reference>
<reference key="8">
    <citation type="journal article" date="2011" name="BMC Syst. Biol.">
        <title>Initial characterization of the human central proteome.</title>
        <authorList>
            <person name="Burkard T.R."/>
            <person name="Planyavsky M."/>
            <person name="Kaupe I."/>
            <person name="Breitwieser F.P."/>
            <person name="Buerckstuemmer T."/>
            <person name="Bennett K.L."/>
            <person name="Superti-Furga G."/>
            <person name="Colinge J."/>
        </authorList>
    </citation>
    <scope>IDENTIFICATION BY MASS SPECTROMETRY [LARGE SCALE ANALYSIS]</scope>
</reference>
<reference key="9">
    <citation type="journal article" date="2014" name="J. Proteomics">
        <title>An enzyme assisted RP-RPLC approach for in-depth analysis of human liver phosphoproteome.</title>
        <authorList>
            <person name="Bian Y."/>
            <person name="Song C."/>
            <person name="Cheng K."/>
            <person name="Dong M."/>
            <person name="Wang F."/>
            <person name="Huang J."/>
            <person name="Sun D."/>
            <person name="Wang L."/>
            <person name="Ye M."/>
            <person name="Zou H."/>
        </authorList>
    </citation>
    <scope>IDENTIFICATION BY MASS SPECTROMETRY [LARGE SCALE ANALYSIS]</scope>
    <source>
        <tissue>Liver</tissue>
    </source>
</reference>
<reference key="10">
    <citation type="journal article" date="2015" name="Proteomics">
        <title>N-terminome analysis of the human mitochondrial proteome.</title>
        <authorList>
            <person name="Vaca Jacome A.S."/>
            <person name="Rabilloud T."/>
            <person name="Schaeffer-Reiss C."/>
            <person name="Rompais M."/>
            <person name="Ayoub D."/>
            <person name="Lane L."/>
            <person name="Bairoch A."/>
            <person name="Van Dorsselaer A."/>
            <person name="Carapito C."/>
        </authorList>
    </citation>
    <scope>CLEAVAGE OF SIGNAL PEPTIDE [LARGE SCALE ANALYSIS] AFTER GLY-37</scope>
    <scope>IDENTIFICATION BY MASS SPECTROMETRY [LARGE SCALE ANALYSIS]</scope>
</reference>
<reference key="11">
    <citation type="journal article" date="2011" name="J. Biol. Chem.">
        <title>Crystal structure of reduced and of oxidized peroxiredoxin IV enzyme reveals a stable oxidized decamer and a non-disulfide-bonded intermediate in the catalytic cycle.</title>
        <authorList>
            <person name="Cao Z."/>
            <person name="Tavender T.J."/>
            <person name="Roszak A.W."/>
            <person name="Cogdell R.J."/>
            <person name="Bulleid N.J."/>
        </authorList>
    </citation>
    <scope>X-RAY CRYSTALLOGRAPHY (1.91 ANGSTROMS)</scope>
    <scope>DISULFIDE BONDS</scope>
</reference>
<reference key="12">
    <citation type="journal article" date="2012" name="Biochem. J.">
        <title>Structural insights into the peroxidase activity and inactivation of human peroxiredoxin 4.</title>
        <authorList>
            <person name="Wang X."/>
            <person name="Wang L."/>
            <person name="Wang X."/>
            <person name="Sun F."/>
            <person name="Wang C.C."/>
        </authorList>
    </citation>
    <scope>X-RAY CRYSTALLOGRAPHY (2.10 ANGSTROMS)</scope>
    <scope>CATALYTIC ACTIVITY</scope>
</reference>
<feature type="signal peptide" evidence="4 14">
    <location>
        <begin position="1"/>
        <end position="37"/>
    </location>
</feature>
<feature type="chain" id="PRO_0000135098" description="Peroxiredoxin-4">
    <location>
        <begin position="38"/>
        <end position="271"/>
    </location>
</feature>
<feature type="domain" description="Thioredoxin" evidence="1">
    <location>
        <begin position="79"/>
        <end position="237"/>
    </location>
</feature>
<feature type="active site" description="Cysteine sulfenic acid (-SOH) intermediate" evidence="9 10">
    <location>
        <position position="124"/>
    </location>
</feature>
<feature type="disulfide bond" description="Interchain (with C-245); in linked form" evidence="6 12 13">
    <location>
        <position position="124"/>
    </location>
</feature>
<feature type="disulfide bond" description="Interchain (with C-124); in linked form" evidence="6 12 13">
    <location>
        <position position="245"/>
    </location>
</feature>
<feature type="sequence conflict" description="In Ref. 3; CAG46469." evidence="8" ref="3">
    <original>P</original>
    <variation>S</variation>
    <location>
        <position position="12"/>
    </location>
</feature>
<feature type="sequence conflict" description="In Ref. 3; CAG46469." evidence="8" ref="3">
    <original>C</original>
    <variation>Y</variation>
    <location>
        <position position="51"/>
    </location>
</feature>
<feature type="strand" evidence="16">
    <location>
        <begin position="75"/>
        <end position="78"/>
    </location>
</feature>
<feature type="strand" evidence="15">
    <location>
        <begin position="89"/>
        <end position="94"/>
    </location>
</feature>
<feature type="strand" evidence="15">
    <location>
        <begin position="97"/>
        <end position="102"/>
    </location>
</feature>
<feature type="helix" evidence="15">
    <location>
        <begin position="103"/>
        <end position="106"/>
    </location>
</feature>
<feature type="strand" evidence="15">
    <location>
        <begin position="109"/>
        <end position="115"/>
    </location>
</feature>
<feature type="helix" evidence="15">
    <location>
        <begin position="123"/>
        <end position="133"/>
    </location>
</feature>
<feature type="helix" evidence="15">
    <location>
        <begin position="135"/>
        <end position="139"/>
    </location>
</feature>
<feature type="turn" evidence="15">
    <location>
        <begin position="140"/>
        <end position="142"/>
    </location>
</feature>
<feature type="strand" evidence="15">
    <location>
        <begin position="143"/>
        <end position="151"/>
    </location>
</feature>
<feature type="helix" evidence="15">
    <location>
        <begin position="153"/>
        <end position="160"/>
    </location>
</feature>
<feature type="helix" evidence="15">
    <location>
        <begin position="164"/>
        <end position="166"/>
    </location>
</feature>
<feature type="strand" evidence="15">
    <location>
        <begin position="176"/>
        <end position="178"/>
    </location>
</feature>
<feature type="strand" evidence="18">
    <location>
        <begin position="180"/>
        <end position="182"/>
    </location>
</feature>
<feature type="helix" evidence="15">
    <location>
        <begin position="183"/>
        <end position="187"/>
    </location>
</feature>
<feature type="turn" evidence="15">
    <location>
        <begin position="193"/>
        <end position="195"/>
    </location>
</feature>
<feature type="strand" evidence="15">
    <location>
        <begin position="196"/>
        <end position="198"/>
    </location>
</feature>
<feature type="strand" evidence="15">
    <location>
        <begin position="200"/>
        <end position="205"/>
    </location>
</feature>
<feature type="strand" evidence="15">
    <location>
        <begin position="209"/>
        <end position="217"/>
    </location>
</feature>
<feature type="helix" evidence="15">
    <location>
        <begin position="225"/>
        <end position="241"/>
    </location>
</feature>
<feature type="strand" evidence="19">
    <location>
        <begin position="256"/>
        <end position="258"/>
    </location>
</feature>
<feature type="turn" evidence="15">
    <location>
        <begin position="260"/>
        <end position="262"/>
    </location>
</feature>
<feature type="helix" evidence="15">
    <location>
        <begin position="263"/>
        <end position="267"/>
    </location>
</feature>
<feature type="turn" evidence="17">
    <location>
        <begin position="268"/>
        <end position="270"/>
    </location>
</feature>
<keyword id="KW-0002">3D-structure</keyword>
<keyword id="KW-0049">Antioxidant</keyword>
<keyword id="KW-0963">Cytoplasm</keyword>
<keyword id="KW-0903">Direct protein sequencing</keyword>
<keyword id="KW-1015">Disulfide bond</keyword>
<keyword id="KW-0256">Endoplasmic reticulum</keyword>
<keyword id="KW-0560">Oxidoreductase</keyword>
<keyword id="KW-0575">Peroxidase</keyword>
<keyword id="KW-1267">Proteomics identification</keyword>
<keyword id="KW-0676">Redox-active center</keyword>
<keyword id="KW-1185">Reference proteome</keyword>
<keyword id="KW-0732">Signal</keyword>
<gene>
    <name type="primary">PRDX4</name>
</gene>
<accession>Q13162</accession>
<accession>Q6FHT3</accession>
<comment type="function">
    <text evidence="7">Thiol-specific peroxidase that catalyzes the reduction of hydrogen peroxide and organic hydroperoxides to water and alcohols, respectively. Plays a role in cell protection against oxidative stress by detoxifying peroxides and as sensor of hydrogen peroxide-mediated signaling events. Regulates the activation of NF-kappa-B in the cytosol by a modulation of I-kappa-B-alpha phosphorylation.</text>
</comment>
<comment type="catalytic activity">
    <reaction evidence="5 7">
        <text>a hydroperoxide + [thioredoxin]-dithiol = an alcohol + [thioredoxin]-disulfide + H2O</text>
        <dbReference type="Rhea" id="RHEA:62620"/>
        <dbReference type="Rhea" id="RHEA-COMP:10698"/>
        <dbReference type="Rhea" id="RHEA-COMP:10700"/>
        <dbReference type="ChEBI" id="CHEBI:15377"/>
        <dbReference type="ChEBI" id="CHEBI:29950"/>
        <dbReference type="ChEBI" id="CHEBI:30879"/>
        <dbReference type="ChEBI" id="CHEBI:35924"/>
        <dbReference type="ChEBI" id="CHEBI:50058"/>
        <dbReference type="EC" id="1.11.1.24"/>
    </reaction>
</comment>
<comment type="subunit">
    <text evidence="6 7">Homodimer; disulfide-linked, upon oxidation (PubMed:9388242). 5 homodimers assemble to form a ring-like decamer (PubMed:21994946). Can form heterodimers with PRDX1 (PubMed:9388242).</text>
</comment>
<comment type="interaction">
    <interactant intactId="EBI-2211957">
        <id>Q13162</id>
    </interactant>
    <interactant intactId="EBI-930964">
        <id>P54253</id>
        <label>ATXN1</label>
    </interactant>
    <organismsDiffer>false</organismsDiffer>
    <experiments>4</experiments>
</comment>
<comment type="interaction">
    <interactant intactId="EBI-2211957">
        <id>Q13162</id>
    </interactant>
    <interactant intactId="EBI-3927059">
        <id>P18428</id>
        <label>LBP</label>
    </interactant>
    <organismsDiffer>false</organismsDiffer>
    <experiments>4</experiments>
</comment>
<comment type="interaction">
    <interactant intactId="EBI-2211957">
        <id>Q13162</id>
    </interactant>
    <interactant intactId="EBI-395883">
        <id>P07237</id>
        <label>P4HB</label>
    </interactant>
    <organismsDiffer>false</organismsDiffer>
    <experiments>2</experiments>
</comment>
<comment type="interaction">
    <interactant intactId="EBI-2211957">
        <id>Q13162</id>
    </interactant>
    <interactant intactId="EBI-979862">
        <id>P30101</id>
        <label>PDIA3</label>
    </interactant>
    <organismsDiffer>false</organismsDiffer>
    <experiments>2</experiments>
</comment>
<comment type="interaction">
    <interactant intactId="EBI-2211957">
        <id>Q13162</id>
    </interactant>
    <interactant intactId="EBI-1043087">
        <id>Q15084</id>
        <label>PDIA6</label>
    </interactant>
    <organismsDiffer>false</organismsDiffer>
    <experiments>2</experiments>
</comment>
<comment type="interaction">
    <interactant intactId="EBI-2211957">
        <id>Q13162</id>
    </interactant>
    <interactant intactId="EBI-353193">
        <id>Q06830</id>
        <label>PRDX1</label>
    </interactant>
    <organismsDiffer>false</organismsDiffer>
    <experiments>2</experiments>
</comment>
<comment type="interaction">
    <interactant intactId="EBI-2211957">
        <id>Q13162</id>
    </interactant>
    <interactant intactId="EBI-2625082">
        <id>P21731</id>
        <label>TBXA2R</label>
    </interactant>
    <organismsDiffer>false</organismsDiffer>
    <experiments>3</experiments>
</comment>
<comment type="interaction">
    <interactant intactId="EBI-2211957">
        <id>Q13162</id>
    </interactant>
    <interactant intactId="EBI-2510815">
        <id>Q8NBS9</id>
        <label>TXNDC5</label>
    </interactant>
    <organismsDiffer>false</organismsDiffer>
    <experiments>2</experiments>
</comment>
<comment type="subcellular location">
    <subcellularLocation>
        <location evidence="3 7">Cytoplasm</location>
    </subcellularLocation>
    <subcellularLocation>
        <location evidence="3">Endoplasmic reticulum</location>
    </subcellularLocation>
    <text evidence="3">Cotranslationally translocated to and retained within the endoplasmic reticulum. A small fraction of the protein is cytoplasmic.</text>
</comment>
<comment type="PTM">
    <text evidence="2 5">The enzyme can be inactivated by further oxidation of the cysteine sulfenic acid (C(P)-SOH) to sulphinic acid (C(P)-SO2H) and sulphonic acid (C(P)-SO3H) instead of its condensation to a disulfide bond.</text>
</comment>
<comment type="miscellaneous">
    <text evidence="11">The active site is a conserved redox-active cysteine residue, the peroxidatic cysteine (C(P)), which makes the nucleophilic attack on the peroxide substrate. The peroxide oxidizes the C(P)-SH to cysteine sulfenic acid (C(P)-SOH), which then reacts with another cysteine residue, the resolving cysteine (C(R)), to form a disulfide bridge. The disulfide is subsequently reduced by an appropriate electron donor to complete the catalytic cycle. In this typical 2-Cys peroxiredoxin, C(R) is provided by the other dimeric subunit to form an intersubunit disulfide. The disulfide is subsequently reduced by thioredoxin.</text>
</comment>
<comment type="similarity">
    <text evidence="8">Belongs to the peroxiredoxin family. AhpC/Prx1 subfamily.</text>
</comment>
<protein>
    <recommendedName>
        <fullName>Peroxiredoxin-4</fullName>
        <ecNumber evidence="5 7">1.11.1.24</ecNumber>
    </recommendedName>
    <alternativeName>
        <fullName>Antioxidant enzyme AOE372</fullName>
        <shortName>AOE37-2</shortName>
    </alternativeName>
    <alternativeName>
        <fullName>Peroxiredoxin IV</fullName>
        <shortName>Prx-IV</shortName>
    </alternativeName>
    <alternativeName>
        <fullName>Thioredoxin peroxidase AO372</fullName>
    </alternativeName>
    <alternativeName>
        <fullName>Thioredoxin-dependent peroxide reductase A0372</fullName>
    </alternativeName>
    <alternativeName>
        <fullName evidence="8">Thioredoxin-dependent peroxiredoxin 4</fullName>
    </alternativeName>
</protein>
<organism>
    <name type="scientific">Homo sapiens</name>
    <name type="common">Human</name>
    <dbReference type="NCBI Taxonomy" id="9606"/>
    <lineage>
        <taxon>Eukaryota</taxon>
        <taxon>Metazoa</taxon>
        <taxon>Chordata</taxon>
        <taxon>Craniata</taxon>
        <taxon>Vertebrata</taxon>
        <taxon>Euteleostomi</taxon>
        <taxon>Mammalia</taxon>
        <taxon>Eutheria</taxon>
        <taxon>Euarchontoglires</taxon>
        <taxon>Primates</taxon>
        <taxon>Haplorrhini</taxon>
        <taxon>Catarrhini</taxon>
        <taxon>Hominidae</taxon>
        <taxon>Homo</taxon>
    </lineage>
</organism>
<dbReference type="EC" id="1.11.1.24" evidence="5 7"/>
<dbReference type="EMBL" id="U25182">
    <property type="protein sequence ID" value="AAB95175.1"/>
    <property type="molecule type" value="mRNA"/>
</dbReference>
<dbReference type="EMBL" id="CR541668">
    <property type="protein sequence ID" value="CAG46469.1"/>
    <property type="molecule type" value="mRNA"/>
</dbReference>
<dbReference type="EMBL" id="CR541705">
    <property type="protein sequence ID" value="CAG46506.1"/>
    <property type="molecule type" value="mRNA"/>
</dbReference>
<dbReference type="EMBL" id="BC003609">
    <property type="protein sequence ID" value="AAH03609.1"/>
    <property type="molecule type" value="mRNA"/>
</dbReference>
<dbReference type="EMBL" id="BC007107">
    <property type="protein sequence ID" value="AAH07107.1"/>
    <property type="molecule type" value="mRNA"/>
</dbReference>
<dbReference type="EMBL" id="BC016770">
    <property type="protein sequence ID" value="AAH16770.1"/>
    <property type="molecule type" value="mRNA"/>
</dbReference>
<dbReference type="CCDS" id="CCDS14206.1"/>
<dbReference type="PIR" id="G01790">
    <property type="entry name" value="G01790"/>
</dbReference>
<dbReference type="RefSeq" id="NP_006397.1">
    <property type="nucleotide sequence ID" value="NM_006406.2"/>
</dbReference>
<dbReference type="PDB" id="2PN8">
    <property type="method" value="X-ray"/>
    <property type="resolution" value="1.80 A"/>
    <property type="chains" value="A/B/C/D/E/F/G/H/I/J=84-271"/>
</dbReference>
<dbReference type="PDB" id="3TJB">
    <property type="method" value="X-ray"/>
    <property type="resolution" value="2.38 A"/>
    <property type="chains" value="A/B/C/D/E=38-271"/>
</dbReference>
<dbReference type="PDB" id="3TJF">
    <property type="method" value="X-ray"/>
    <property type="resolution" value="2.04 A"/>
    <property type="chains" value="A/B/C/D/E=38-271"/>
</dbReference>
<dbReference type="PDB" id="3TJG">
    <property type="method" value="X-ray"/>
    <property type="resolution" value="2.24 A"/>
    <property type="chains" value="A/B/C/D/E=38-271"/>
</dbReference>
<dbReference type="PDB" id="3TJJ">
    <property type="method" value="X-ray"/>
    <property type="resolution" value="1.91 A"/>
    <property type="chains" value="A/B/C/D/E=38-271"/>
</dbReference>
<dbReference type="PDB" id="3TJK">
    <property type="method" value="X-ray"/>
    <property type="resolution" value="2.09 A"/>
    <property type="chains" value="A/B/C/D/E=38-271"/>
</dbReference>
<dbReference type="PDB" id="3TKP">
    <property type="method" value="X-ray"/>
    <property type="resolution" value="2.49 A"/>
    <property type="chains" value="A/B/C/D/E=38-271"/>
</dbReference>
<dbReference type="PDB" id="3TKQ">
    <property type="method" value="X-ray"/>
    <property type="resolution" value="2.22 A"/>
    <property type="chains" value="A/B/C/D/E=38-271"/>
</dbReference>
<dbReference type="PDB" id="3TKR">
    <property type="method" value="X-ray"/>
    <property type="resolution" value="2.10 A"/>
    <property type="chains" value="A/B/C/D/E/F/G/H/I/J=38-271"/>
</dbReference>
<dbReference type="PDB" id="3TKS">
    <property type="method" value="X-ray"/>
    <property type="resolution" value="2.40 A"/>
    <property type="chains" value="A/B/C/D/E=38-271"/>
</dbReference>
<dbReference type="PDB" id="4RQX">
    <property type="method" value="X-ray"/>
    <property type="resolution" value="2.26 A"/>
    <property type="chains" value="A/B/C/D/E=79-271"/>
</dbReference>
<dbReference type="PDB" id="5HQP">
    <property type="method" value="X-ray"/>
    <property type="resolution" value="2.60 A"/>
    <property type="chains" value="A/B=38-271"/>
</dbReference>
<dbReference type="PDB" id="8EKW">
    <property type="method" value="EM"/>
    <property type="resolution" value="2.83 A"/>
    <property type="chains" value="A/B/C/D/E/F/G/H/I/J=1-271"/>
</dbReference>
<dbReference type="PDB" id="8EKY">
    <property type="method" value="EM"/>
    <property type="resolution" value="3.47 A"/>
    <property type="chains" value="A/B/C/D/E/F/G/H/I/J=1-271"/>
</dbReference>
<dbReference type="PDBsum" id="2PN8"/>
<dbReference type="PDBsum" id="3TJB"/>
<dbReference type="PDBsum" id="3TJF"/>
<dbReference type="PDBsum" id="3TJG"/>
<dbReference type="PDBsum" id="3TJJ"/>
<dbReference type="PDBsum" id="3TJK"/>
<dbReference type="PDBsum" id="3TKP"/>
<dbReference type="PDBsum" id="3TKQ"/>
<dbReference type="PDBsum" id="3TKR"/>
<dbReference type="PDBsum" id="3TKS"/>
<dbReference type="PDBsum" id="4RQX"/>
<dbReference type="PDBsum" id="5HQP"/>
<dbReference type="PDBsum" id="8EKW"/>
<dbReference type="PDBsum" id="8EKY"/>
<dbReference type="EMDB" id="EMD-28214"/>
<dbReference type="EMDB" id="EMD-28217"/>
<dbReference type="SMR" id="Q13162"/>
<dbReference type="BioGRID" id="115800">
    <property type="interactions" value="240"/>
</dbReference>
<dbReference type="FunCoup" id="Q13162">
    <property type="interactions" value="1206"/>
</dbReference>
<dbReference type="IntAct" id="Q13162">
    <property type="interactions" value="98"/>
</dbReference>
<dbReference type="MINT" id="Q13162"/>
<dbReference type="STRING" id="9606.ENSP00000368646"/>
<dbReference type="ChEMBL" id="CHEMBL4295812"/>
<dbReference type="PeroxiBase" id="4530">
    <property type="entry name" value="Hs2CysPrx04"/>
</dbReference>
<dbReference type="GlyGen" id="Q13162">
    <property type="glycosylation" value="1 site, 1 O-linked glycan (1 site)"/>
</dbReference>
<dbReference type="iPTMnet" id="Q13162"/>
<dbReference type="PhosphoSitePlus" id="Q13162"/>
<dbReference type="SwissPalm" id="Q13162"/>
<dbReference type="BioMuta" id="PRDX4"/>
<dbReference type="DMDM" id="3024727"/>
<dbReference type="OGP" id="Q13162"/>
<dbReference type="REPRODUCTION-2DPAGE" id="IPI00011937"/>
<dbReference type="CPTAC" id="CPTAC-1448"/>
<dbReference type="CPTAC" id="CPTAC-1449"/>
<dbReference type="CPTAC" id="CPTAC-1450"/>
<dbReference type="CPTAC" id="CPTAC-1451"/>
<dbReference type="CPTAC" id="CPTAC-713"/>
<dbReference type="CPTAC" id="CPTAC-714"/>
<dbReference type="jPOST" id="Q13162"/>
<dbReference type="MassIVE" id="Q13162"/>
<dbReference type="PaxDb" id="9606-ENSP00000368646"/>
<dbReference type="PeptideAtlas" id="Q13162"/>
<dbReference type="ProteomicsDB" id="59198"/>
<dbReference type="Pumba" id="Q13162"/>
<dbReference type="TopDownProteomics" id="Q13162"/>
<dbReference type="ABCD" id="Q13162">
    <property type="antibodies" value="2 sequenced antibodies"/>
</dbReference>
<dbReference type="Antibodypedia" id="3275">
    <property type="antibodies" value="476 antibodies from 39 providers"/>
</dbReference>
<dbReference type="CPTC" id="Q13162">
    <property type="antibodies" value="5 antibodies"/>
</dbReference>
<dbReference type="DNASU" id="10549"/>
<dbReference type="Ensembl" id="ENST00000379341.9">
    <property type="protein sequence ID" value="ENSP00000368646.4"/>
    <property type="gene ID" value="ENSG00000123131.13"/>
</dbReference>
<dbReference type="GeneID" id="10549"/>
<dbReference type="KEGG" id="hsa:10549"/>
<dbReference type="MANE-Select" id="ENST00000379341.9">
    <property type="protein sequence ID" value="ENSP00000368646.4"/>
    <property type="RefSeq nucleotide sequence ID" value="NM_006406.2"/>
    <property type="RefSeq protein sequence ID" value="NP_006397.1"/>
</dbReference>
<dbReference type="AGR" id="HGNC:17169"/>
<dbReference type="CTD" id="10549"/>
<dbReference type="DisGeNET" id="10549"/>
<dbReference type="GeneCards" id="PRDX4"/>
<dbReference type="HGNC" id="HGNC:17169">
    <property type="gene designation" value="PRDX4"/>
</dbReference>
<dbReference type="HPA" id="ENSG00000123131">
    <property type="expression patterns" value="Tissue enriched (pancreas)"/>
</dbReference>
<dbReference type="MIM" id="300927">
    <property type="type" value="gene"/>
</dbReference>
<dbReference type="neXtProt" id="NX_Q13162"/>
<dbReference type="OpenTargets" id="ENSG00000123131"/>
<dbReference type="PharmGKB" id="PA33725"/>
<dbReference type="VEuPathDB" id="HostDB:ENSG00000123131"/>
<dbReference type="eggNOG" id="KOG0852">
    <property type="taxonomic scope" value="Eukaryota"/>
</dbReference>
<dbReference type="GeneTree" id="ENSGT00940000153430"/>
<dbReference type="HOGENOM" id="CLU_042529_21_1_1"/>
<dbReference type="InParanoid" id="Q13162"/>
<dbReference type="OMA" id="NNFGVMR"/>
<dbReference type="OrthoDB" id="185659at2759"/>
<dbReference type="PAN-GO" id="Q13162">
    <property type="GO annotations" value="7 GO annotations based on evolutionary models"/>
</dbReference>
<dbReference type="PhylomeDB" id="Q13162"/>
<dbReference type="TreeFam" id="TF105181"/>
<dbReference type="BRENDA" id="1.11.1.24">
    <property type="organism ID" value="2681"/>
</dbReference>
<dbReference type="PathwayCommons" id="Q13162"/>
<dbReference type="Reactome" id="R-HSA-6798695">
    <property type="pathway name" value="Neutrophil degranulation"/>
</dbReference>
<dbReference type="SignaLink" id="Q13162"/>
<dbReference type="BioGRID-ORCS" id="10549">
    <property type="hits" value="21 hits in 782 CRISPR screens"/>
</dbReference>
<dbReference type="CD-CODE" id="DEE660B4">
    <property type="entry name" value="Stress granule"/>
</dbReference>
<dbReference type="ChiTaRS" id="PRDX4">
    <property type="organism name" value="human"/>
</dbReference>
<dbReference type="EvolutionaryTrace" id="Q13162"/>
<dbReference type="GeneWiki" id="PRDX4"/>
<dbReference type="GenomeRNAi" id="10549"/>
<dbReference type="Pharos" id="Q13162">
    <property type="development level" value="Tbio"/>
</dbReference>
<dbReference type="PRO" id="PR:Q13162"/>
<dbReference type="Proteomes" id="UP000005640">
    <property type="component" value="Chromosome X"/>
</dbReference>
<dbReference type="RNAct" id="Q13162">
    <property type="molecule type" value="protein"/>
</dbReference>
<dbReference type="Bgee" id="ENSG00000123131">
    <property type="expression patterns" value="Expressed in body of pancreas and 214 other cell types or tissues"/>
</dbReference>
<dbReference type="ExpressionAtlas" id="Q13162">
    <property type="expression patterns" value="baseline and differential"/>
</dbReference>
<dbReference type="GO" id="GO:0005829">
    <property type="term" value="C:cytosol"/>
    <property type="evidence" value="ECO:0000318"/>
    <property type="project" value="GO_Central"/>
</dbReference>
<dbReference type="GO" id="GO:0005783">
    <property type="term" value="C:endoplasmic reticulum"/>
    <property type="evidence" value="ECO:0000318"/>
    <property type="project" value="GO_Central"/>
</dbReference>
<dbReference type="GO" id="GO:0070062">
    <property type="term" value="C:extracellular exosome"/>
    <property type="evidence" value="ECO:0007005"/>
    <property type="project" value="UniProtKB"/>
</dbReference>
<dbReference type="GO" id="GO:0005576">
    <property type="term" value="C:extracellular region"/>
    <property type="evidence" value="ECO:0000304"/>
    <property type="project" value="Reactome"/>
</dbReference>
<dbReference type="GO" id="GO:1904813">
    <property type="term" value="C:ficolin-1-rich granule lumen"/>
    <property type="evidence" value="ECO:0000304"/>
    <property type="project" value="Reactome"/>
</dbReference>
<dbReference type="GO" id="GO:0005634">
    <property type="term" value="C:nucleus"/>
    <property type="evidence" value="ECO:0007005"/>
    <property type="project" value="UniProtKB"/>
</dbReference>
<dbReference type="GO" id="GO:0034774">
    <property type="term" value="C:secretory granule lumen"/>
    <property type="evidence" value="ECO:0000304"/>
    <property type="project" value="Reactome"/>
</dbReference>
<dbReference type="GO" id="GO:0042802">
    <property type="term" value="F:identical protein binding"/>
    <property type="evidence" value="ECO:0007669"/>
    <property type="project" value="Ensembl"/>
</dbReference>
<dbReference type="GO" id="GO:0060090">
    <property type="term" value="F:molecular adaptor activity"/>
    <property type="evidence" value="ECO:0000269"/>
    <property type="project" value="DisProt"/>
</dbReference>
<dbReference type="GO" id="GO:0140313">
    <property type="term" value="F:molecular sequestering activity"/>
    <property type="evidence" value="ECO:0000314"/>
    <property type="project" value="DisProt"/>
</dbReference>
<dbReference type="GO" id="GO:0008379">
    <property type="term" value="F:thioredoxin peroxidase activity"/>
    <property type="evidence" value="ECO:0000318"/>
    <property type="project" value="GO_Central"/>
</dbReference>
<dbReference type="GO" id="GO:0045454">
    <property type="term" value="P:cell redox homeostasis"/>
    <property type="evidence" value="ECO:0000318"/>
    <property type="project" value="GO_Central"/>
</dbReference>
<dbReference type="GO" id="GO:0030198">
    <property type="term" value="P:extracellular matrix organization"/>
    <property type="evidence" value="ECO:0007669"/>
    <property type="project" value="Ensembl"/>
</dbReference>
<dbReference type="GO" id="GO:0042744">
    <property type="term" value="P:hydrogen peroxide catabolic process"/>
    <property type="evidence" value="ECO:0000318"/>
    <property type="project" value="GO_Central"/>
</dbReference>
<dbReference type="GO" id="GO:0007252">
    <property type="term" value="P:I-kappaB phosphorylation"/>
    <property type="evidence" value="ECO:0000304"/>
    <property type="project" value="ProtInc"/>
</dbReference>
<dbReference type="GO" id="GO:0008584">
    <property type="term" value="P:male gonad development"/>
    <property type="evidence" value="ECO:0007669"/>
    <property type="project" value="Ensembl"/>
</dbReference>
<dbReference type="GO" id="GO:2000255">
    <property type="term" value="P:negative regulation of male germ cell proliferation"/>
    <property type="evidence" value="ECO:0007669"/>
    <property type="project" value="Ensembl"/>
</dbReference>
<dbReference type="GO" id="GO:0051604">
    <property type="term" value="P:protein maturation"/>
    <property type="evidence" value="ECO:0007669"/>
    <property type="project" value="Ensembl"/>
</dbReference>
<dbReference type="GO" id="GO:0006979">
    <property type="term" value="P:response to oxidative stress"/>
    <property type="evidence" value="ECO:0000318"/>
    <property type="project" value="GO_Central"/>
</dbReference>
<dbReference type="GO" id="GO:0007283">
    <property type="term" value="P:spermatogenesis"/>
    <property type="evidence" value="ECO:0007669"/>
    <property type="project" value="Ensembl"/>
</dbReference>
<dbReference type="CDD" id="cd03015">
    <property type="entry name" value="PRX_Typ2cys"/>
    <property type="match status" value="1"/>
</dbReference>
<dbReference type="DisProt" id="DP02764"/>
<dbReference type="FunFam" id="3.40.30.10:FF:000003">
    <property type="entry name" value="Peroxiredoxin 1"/>
    <property type="match status" value="1"/>
</dbReference>
<dbReference type="Gene3D" id="3.40.30.10">
    <property type="entry name" value="Glutaredoxin"/>
    <property type="match status" value="1"/>
</dbReference>
<dbReference type="InterPro" id="IPR000866">
    <property type="entry name" value="AhpC/TSA"/>
</dbReference>
<dbReference type="InterPro" id="IPR050217">
    <property type="entry name" value="Peroxiredoxin"/>
</dbReference>
<dbReference type="InterPro" id="IPR019479">
    <property type="entry name" value="Peroxiredoxin_C"/>
</dbReference>
<dbReference type="InterPro" id="IPR036249">
    <property type="entry name" value="Thioredoxin-like_sf"/>
</dbReference>
<dbReference type="InterPro" id="IPR013766">
    <property type="entry name" value="Thioredoxin_domain"/>
</dbReference>
<dbReference type="PANTHER" id="PTHR10681:SF173">
    <property type="entry name" value="PEROXIREDOXIN-4"/>
    <property type="match status" value="1"/>
</dbReference>
<dbReference type="PANTHER" id="PTHR10681">
    <property type="entry name" value="THIOREDOXIN PEROXIDASE"/>
    <property type="match status" value="1"/>
</dbReference>
<dbReference type="Pfam" id="PF10417">
    <property type="entry name" value="1-cysPrx_C"/>
    <property type="match status" value="1"/>
</dbReference>
<dbReference type="Pfam" id="PF00578">
    <property type="entry name" value="AhpC-TSA"/>
    <property type="match status" value="1"/>
</dbReference>
<dbReference type="SUPFAM" id="SSF52833">
    <property type="entry name" value="Thioredoxin-like"/>
    <property type="match status" value="1"/>
</dbReference>
<dbReference type="PROSITE" id="PS51352">
    <property type="entry name" value="THIOREDOXIN_2"/>
    <property type="match status" value="1"/>
</dbReference>
<evidence type="ECO:0000255" key="1">
    <source>
        <dbReference type="PROSITE-ProRule" id="PRU00691"/>
    </source>
</evidence>
<evidence type="ECO:0000269" key="2">
    <source>
    </source>
</evidence>
<evidence type="ECO:0000269" key="3">
    <source>
    </source>
</evidence>
<evidence type="ECO:0000269" key="4">
    <source>
    </source>
</evidence>
<evidence type="ECO:0000269" key="5">
    <source>
    </source>
</evidence>
<evidence type="ECO:0000269" key="6">
    <source>
    </source>
</evidence>
<evidence type="ECO:0000269" key="7">
    <source>
    </source>
</evidence>
<evidence type="ECO:0000305" key="8"/>
<evidence type="ECO:0000305" key="9">
    <source>
    </source>
</evidence>
<evidence type="ECO:0000305" key="10">
    <source>
    </source>
</evidence>
<evidence type="ECO:0000305" key="11">
    <source>
    </source>
</evidence>
<evidence type="ECO:0007744" key="12">
    <source>
        <dbReference type="PDB" id="3TJB"/>
    </source>
</evidence>
<evidence type="ECO:0007744" key="13">
    <source>
        <dbReference type="PDB" id="3TJG"/>
    </source>
</evidence>
<evidence type="ECO:0007744" key="14">
    <source>
    </source>
</evidence>
<evidence type="ECO:0007829" key="15">
    <source>
        <dbReference type="PDB" id="2PN8"/>
    </source>
</evidence>
<evidence type="ECO:0007829" key="16">
    <source>
        <dbReference type="PDB" id="3TJK"/>
    </source>
</evidence>
<evidence type="ECO:0007829" key="17">
    <source>
        <dbReference type="PDB" id="3TKS"/>
    </source>
</evidence>
<evidence type="ECO:0007829" key="18">
    <source>
        <dbReference type="PDB" id="5HQP"/>
    </source>
</evidence>
<evidence type="ECO:0007829" key="19">
    <source>
        <dbReference type="PDB" id="8EKY"/>
    </source>
</evidence>
<sequence>MEALPLLAATTPDHGRHRRLLLLPLLLFLLPAGAVQGWETEERPRTREEECHFYAGGQVYPGEASRVSVADHSLHLSKAKISKPAPYWEGTAVIDGEFKELKLTDYRGKYLVFFFYPLDFTFVCPTEIIAFGDRLEEFRSINTEVVACSVDSQFTHLAWINTPRRQGGLGPIRIPLLSDLTHQISKDYGVYLEDSGHTLRGLFIIDDKGILRQITLNDLPVGRSVDETLRLVQAFQYTDKHGEVCPAGWKPGSETIIPDPAGKLKYFDKLN</sequence>
<proteinExistence type="evidence at protein level"/>